<organism>
    <name type="scientific">Erwinia tasmaniensis (strain DSM 17950 / CFBP 7177 / CIP 109463 / NCPPB 4357 / Et1/99)</name>
    <dbReference type="NCBI Taxonomy" id="465817"/>
    <lineage>
        <taxon>Bacteria</taxon>
        <taxon>Pseudomonadati</taxon>
        <taxon>Pseudomonadota</taxon>
        <taxon>Gammaproteobacteria</taxon>
        <taxon>Enterobacterales</taxon>
        <taxon>Erwiniaceae</taxon>
        <taxon>Erwinia</taxon>
    </lineage>
</organism>
<comment type="function">
    <text evidence="1">Activates ribosomal RNA transcription. Plays a direct role in upstream activation of rRNA promoters.</text>
</comment>
<comment type="subunit">
    <text evidence="1">Homodimer.</text>
</comment>
<comment type="similarity">
    <text evidence="1">Belongs to the transcriptional regulatory Fis family.</text>
</comment>
<feature type="chain" id="PRO_1000097454" description="DNA-binding protein Fis">
    <location>
        <begin position="1"/>
        <end position="98"/>
    </location>
</feature>
<feature type="DNA-binding region" description="H-T-H motif" evidence="1">
    <location>
        <begin position="74"/>
        <end position="93"/>
    </location>
</feature>
<sequence length="98" mass="11240">MFEQRVNSDVLTVSTVNSQDQVTQKPLRDSVKQALKNYFAQLNGQDVNDLYELVLAEVEQPLLDMVMQYTRGNQTRAALMMGINRGTLRKKLKKYGMN</sequence>
<name>FIS_ERWT9</name>
<accession>B2VL73</accession>
<proteinExistence type="inferred from homology"/>
<gene>
    <name evidence="1" type="primary">fis</name>
    <name type="ordered locus">ETA_02720</name>
</gene>
<dbReference type="EMBL" id="CU468135">
    <property type="protein sequence ID" value="CAO95318.1"/>
    <property type="molecule type" value="Genomic_DNA"/>
</dbReference>
<dbReference type="RefSeq" id="WP_000462905.1">
    <property type="nucleotide sequence ID" value="NC_010694.1"/>
</dbReference>
<dbReference type="SMR" id="B2VL73"/>
<dbReference type="STRING" id="465817.ETA_02720"/>
<dbReference type="GeneID" id="98390389"/>
<dbReference type="KEGG" id="eta:ETA_02720"/>
<dbReference type="eggNOG" id="COG2901">
    <property type="taxonomic scope" value="Bacteria"/>
</dbReference>
<dbReference type="HOGENOM" id="CLU_158040_3_0_6"/>
<dbReference type="OrthoDB" id="9802388at2"/>
<dbReference type="Proteomes" id="UP000001726">
    <property type="component" value="Chromosome"/>
</dbReference>
<dbReference type="GO" id="GO:0003700">
    <property type="term" value="F:DNA-binding transcription factor activity"/>
    <property type="evidence" value="ECO:0007669"/>
    <property type="project" value="UniProtKB-UniRule"/>
</dbReference>
<dbReference type="GO" id="GO:0043565">
    <property type="term" value="F:sequence-specific DNA binding"/>
    <property type="evidence" value="ECO:0007669"/>
    <property type="project" value="InterPro"/>
</dbReference>
<dbReference type="FunFam" id="1.10.10.60:FF:000006">
    <property type="entry name" value="DNA-binding protein Fis"/>
    <property type="match status" value="1"/>
</dbReference>
<dbReference type="Gene3D" id="1.10.10.60">
    <property type="entry name" value="Homeodomain-like"/>
    <property type="match status" value="1"/>
</dbReference>
<dbReference type="HAMAP" id="MF_00166">
    <property type="entry name" value="DNA_binding_Fis"/>
    <property type="match status" value="1"/>
</dbReference>
<dbReference type="InterPro" id="IPR005412">
    <property type="entry name" value="Fis_DNA-bd"/>
</dbReference>
<dbReference type="InterPro" id="IPR009057">
    <property type="entry name" value="Homeodomain-like_sf"/>
</dbReference>
<dbReference type="InterPro" id="IPR002197">
    <property type="entry name" value="HTH_Fis"/>
</dbReference>
<dbReference type="InterPro" id="IPR050207">
    <property type="entry name" value="Trans_regulatory_Fis"/>
</dbReference>
<dbReference type="NCBIfam" id="NF001659">
    <property type="entry name" value="PRK00430.1"/>
    <property type="match status" value="1"/>
</dbReference>
<dbReference type="PANTHER" id="PTHR47918">
    <property type="entry name" value="DNA-BINDING PROTEIN FIS"/>
    <property type="match status" value="1"/>
</dbReference>
<dbReference type="PANTHER" id="PTHR47918:SF1">
    <property type="entry name" value="DNA-BINDING PROTEIN FIS"/>
    <property type="match status" value="1"/>
</dbReference>
<dbReference type="Pfam" id="PF02954">
    <property type="entry name" value="HTH_8"/>
    <property type="match status" value="1"/>
</dbReference>
<dbReference type="PIRSF" id="PIRSF002097">
    <property type="entry name" value="DNA-binding_Fis"/>
    <property type="match status" value="1"/>
</dbReference>
<dbReference type="PRINTS" id="PR01591">
    <property type="entry name" value="DNABINDNGFIS"/>
</dbReference>
<dbReference type="PRINTS" id="PR01590">
    <property type="entry name" value="HTHFIS"/>
</dbReference>
<dbReference type="SUPFAM" id="SSF46689">
    <property type="entry name" value="Homeodomain-like"/>
    <property type="match status" value="1"/>
</dbReference>
<protein>
    <recommendedName>
        <fullName evidence="1">DNA-binding protein Fis</fullName>
    </recommendedName>
</protein>
<reference key="1">
    <citation type="journal article" date="2008" name="Environ. Microbiol.">
        <title>The genome of Erwinia tasmaniensis strain Et1/99, a non-pathogenic bacterium in the genus Erwinia.</title>
        <authorList>
            <person name="Kube M."/>
            <person name="Migdoll A.M."/>
            <person name="Mueller I."/>
            <person name="Kuhl H."/>
            <person name="Beck A."/>
            <person name="Reinhardt R."/>
            <person name="Geider K."/>
        </authorList>
    </citation>
    <scope>NUCLEOTIDE SEQUENCE [LARGE SCALE GENOMIC DNA]</scope>
    <source>
        <strain>DSM 17950 / CFBP 7177 / CIP 109463 / NCPPB 4357 / Et1/99</strain>
    </source>
</reference>
<keyword id="KW-0010">Activator</keyword>
<keyword id="KW-0238">DNA-binding</keyword>
<keyword id="KW-1185">Reference proteome</keyword>
<keyword id="KW-0804">Transcription</keyword>
<keyword id="KW-0805">Transcription regulation</keyword>
<evidence type="ECO:0000255" key="1">
    <source>
        <dbReference type="HAMAP-Rule" id="MF_00166"/>
    </source>
</evidence>